<feature type="chain" id="PRO_0000110652" description="UPF0358 protein SAR1086">
    <location>
        <begin position="1"/>
        <end position="91"/>
    </location>
</feature>
<protein>
    <recommendedName>
        <fullName evidence="1">UPF0358 protein SAR1086</fullName>
    </recommendedName>
</protein>
<organism>
    <name type="scientific">Staphylococcus aureus (strain MRSA252)</name>
    <dbReference type="NCBI Taxonomy" id="282458"/>
    <lineage>
        <taxon>Bacteria</taxon>
        <taxon>Bacillati</taxon>
        <taxon>Bacillota</taxon>
        <taxon>Bacilli</taxon>
        <taxon>Bacillales</taxon>
        <taxon>Staphylococcaceae</taxon>
        <taxon>Staphylococcus</taxon>
    </lineage>
</organism>
<dbReference type="EMBL" id="BX571856">
    <property type="protein sequence ID" value="CAG40088.1"/>
    <property type="molecule type" value="Genomic_DNA"/>
</dbReference>
<dbReference type="RefSeq" id="WP_001118970.1">
    <property type="nucleotide sequence ID" value="NC_002952.2"/>
</dbReference>
<dbReference type="SMR" id="Q6GHX3"/>
<dbReference type="KEGG" id="sar:SAR1086"/>
<dbReference type="HOGENOM" id="CLU_160493_1_0_9"/>
<dbReference type="Proteomes" id="UP000000596">
    <property type="component" value="Chromosome"/>
</dbReference>
<dbReference type="Gene3D" id="1.10.287.750">
    <property type="entry name" value="SO2669-like"/>
    <property type="match status" value="1"/>
</dbReference>
<dbReference type="HAMAP" id="MF_01560">
    <property type="entry name" value="UPF0358"/>
    <property type="match status" value="1"/>
</dbReference>
<dbReference type="InterPro" id="IPR009983">
    <property type="entry name" value="UPF0358"/>
</dbReference>
<dbReference type="InterPro" id="IPR036270">
    <property type="entry name" value="UPF0358_sf"/>
</dbReference>
<dbReference type="NCBIfam" id="NF010187">
    <property type="entry name" value="PRK13666.1"/>
    <property type="match status" value="1"/>
</dbReference>
<dbReference type="Pfam" id="PF07408">
    <property type="entry name" value="DUF1507"/>
    <property type="match status" value="1"/>
</dbReference>
<dbReference type="SUPFAM" id="SSF140404">
    <property type="entry name" value="EF2458-like"/>
    <property type="match status" value="1"/>
</dbReference>
<evidence type="ECO:0000255" key="1">
    <source>
        <dbReference type="HAMAP-Rule" id="MF_01560"/>
    </source>
</evidence>
<sequence length="91" mass="10385">MAKQTTMKNAALKQLTKDADEILHLIKVQLDNLTLPSCPLYEEVLDTQMFGLQKEVDFAVKLGLVDREDGKQIMLRLEKELSKLHEAFTLV</sequence>
<proteinExistence type="inferred from homology"/>
<reference key="1">
    <citation type="journal article" date="2004" name="Proc. Natl. Acad. Sci. U.S.A.">
        <title>Complete genomes of two clinical Staphylococcus aureus strains: evidence for the rapid evolution of virulence and drug resistance.</title>
        <authorList>
            <person name="Holden M.T.G."/>
            <person name="Feil E.J."/>
            <person name="Lindsay J.A."/>
            <person name="Peacock S.J."/>
            <person name="Day N.P.J."/>
            <person name="Enright M.C."/>
            <person name="Foster T.J."/>
            <person name="Moore C.E."/>
            <person name="Hurst L."/>
            <person name="Atkin R."/>
            <person name="Barron A."/>
            <person name="Bason N."/>
            <person name="Bentley S.D."/>
            <person name="Chillingworth C."/>
            <person name="Chillingworth T."/>
            <person name="Churcher C."/>
            <person name="Clark L."/>
            <person name="Corton C."/>
            <person name="Cronin A."/>
            <person name="Doggett J."/>
            <person name="Dowd L."/>
            <person name="Feltwell T."/>
            <person name="Hance Z."/>
            <person name="Harris B."/>
            <person name="Hauser H."/>
            <person name="Holroyd S."/>
            <person name="Jagels K."/>
            <person name="James K.D."/>
            <person name="Lennard N."/>
            <person name="Line A."/>
            <person name="Mayes R."/>
            <person name="Moule S."/>
            <person name="Mungall K."/>
            <person name="Ormond D."/>
            <person name="Quail M.A."/>
            <person name="Rabbinowitsch E."/>
            <person name="Rutherford K.M."/>
            <person name="Sanders M."/>
            <person name="Sharp S."/>
            <person name="Simmonds M."/>
            <person name="Stevens K."/>
            <person name="Whitehead S."/>
            <person name="Barrell B.G."/>
            <person name="Spratt B.G."/>
            <person name="Parkhill J."/>
        </authorList>
    </citation>
    <scope>NUCLEOTIDE SEQUENCE [LARGE SCALE GENOMIC DNA]</scope>
    <source>
        <strain>MRSA252</strain>
    </source>
</reference>
<gene>
    <name type="ordered locus">SAR1086</name>
</gene>
<accession>Q6GHX3</accession>
<name>Y1086_STAAR</name>
<comment type="similarity">
    <text evidence="1">Belongs to the UPF0358 family.</text>
</comment>